<gene>
    <name evidence="2" type="primary">MRI1</name>
    <name type="ORF">SCRG_02596</name>
</gene>
<protein>
    <recommendedName>
        <fullName evidence="2">Methylthioribose-1-phosphate isomerase</fullName>
        <shortName evidence="2">M1Pi</shortName>
        <shortName evidence="2">MTR-1-P isomerase</shortName>
        <ecNumber evidence="2">5.3.1.23</ecNumber>
    </recommendedName>
    <alternativeName>
        <fullName evidence="2">S-methyl-5-thioribose-1-phosphate isomerase</fullName>
    </alternativeName>
    <alternativeName>
        <fullName evidence="2">Translation initiation factor eIF-2B subunit alpha/beta/delta-like protein</fullName>
    </alternativeName>
</protein>
<keyword id="KW-0007">Acetylation</keyword>
<keyword id="KW-0028">Amino-acid biosynthesis</keyword>
<keyword id="KW-0963">Cytoplasm</keyword>
<keyword id="KW-0413">Isomerase</keyword>
<keyword id="KW-0486">Methionine biosynthesis</keyword>
<keyword id="KW-0539">Nucleus</keyword>
<keyword id="KW-0597">Phosphoprotein</keyword>
<reference key="1">
    <citation type="submission" date="2005-03" db="EMBL/GenBank/DDBJ databases">
        <title>Annotation of the Saccharomyces cerevisiae RM11-1a genome.</title>
        <authorList>
            <consortium name="The Broad Institute Genome Sequencing Platform"/>
            <person name="Birren B.W."/>
            <person name="Lander E.S."/>
            <person name="Galagan J.E."/>
            <person name="Nusbaum C."/>
            <person name="Devon K."/>
            <person name="Cuomo C."/>
            <person name="Jaffe D.B."/>
            <person name="Butler J."/>
            <person name="Alvarez P."/>
            <person name="Gnerre S."/>
            <person name="Grabherr M."/>
            <person name="Kleber M."/>
            <person name="Mauceli E.W."/>
            <person name="Brockman W."/>
            <person name="MacCallum I.A."/>
            <person name="Rounsley S."/>
            <person name="Young S.K."/>
            <person name="LaButti K."/>
            <person name="Pushparaj V."/>
            <person name="DeCaprio D."/>
            <person name="Crawford M."/>
            <person name="Koehrsen M."/>
            <person name="Engels R."/>
            <person name="Montgomery P."/>
            <person name="Pearson M."/>
            <person name="Howarth C."/>
            <person name="Larson L."/>
            <person name="Luoma S."/>
            <person name="White J."/>
            <person name="O'Leary S."/>
            <person name="Kodira C.D."/>
            <person name="Zeng Q."/>
            <person name="Yandava C."/>
            <person name="Alvarado L."/>
            <person name="Pratt S."/>
            <person name="Kruglyak L."/>
        </authorList>
    </citation>
    <scope>NUCLEOTIDE SEQUENCE [LARGE SCALE GENOMIC DNA]</scope>
    <source>
        <strain>RM11-1a</strain>
    </source>
</reference>
<proteinExistence type="inferred from homology"/>
<dbReference type="EC" id="5.3.1.23" evidence="2"/>
<dbReference type="EMBL" id="CH408046">
    <property type="protein sequence ID" value="EDV11310.1"/>
    <property type="molecule type" value="Genomic_DNA"/>
</dbReference>
<dbReference type="SMR" id="B3LK82"/>
<dbReference type="HOGENOM" id="CLU_016218_1_3_1"/>
<dbReference type="OrthoDB" id="29993at4893"/>
<dbReference type="UniPathway" id="UPA00904">
    <property type="reaction ID" value="UER00874"/>
</dbReference>
<dbReference type="Proteomes" id="UP000008335">
    <property type="component" value="Unassembled WGS sequence"/>
</dbReference>
<dbReference type="GO" id="GO:0005737">
    <property type="term" value="C:cytoplasm"/>
    <property type="evidence" value="ECO:0007669"/>
    <property type="project" value="UniProtKB-SubCell"/>
</dbReference>
<dbReference type="GO" id="GO:0005634">
    <property type="term" value="C:nucleus"/>
    <property type="evidence" value="ECO:0007669"/>
    <property type="project" value="UniProtKB-SubCell"/>
</dbReference>
<dbReference type="GO" id="GO:0046523">
    <property type="term" value="F:S-methyl-5-thioribose-1-phosphate isomerase activity"/>
    <property type="evidence" value="ECO:0007669"/>
    <property type="project" value="UniProtKB-UniRule"/>
</dbReference>
<dbReference type="GO" id="GO:0019509">
    <property type="term" value="P:L-methionine salvage from methylthioadenosine"/>
    <property type="evidence" value="ECO:0007669"/>
    <property type="project" value="UniProtKB-UniRule"/>
</dbReference>
<dbReference type="FunFam" id="1.20.120.420:FF:000006">
    <property type="entry name" value="Methylthioribose-1-phosphate isomerase"/>
    <property type="match status" value="1"/>
</dbReference>
<dbReference type="FunFam" id="3.40.50.10470:FF:000026">
    <property type="entry name" value="Methylthioribose-1-phosphate isomerase"/>
    <property type="match status" value="1"/>
</dbReference>
<dbReference type="Gene3D" id="1.20.120.420">
    <property type="entry name" value="translation initiation factor eif-2b, domain 1"/>
    <property type="match status" value="1"/>
</dbReference>
<dbReference type="Gene3D" id="3.40.50.10470">
    <property type="entry name" value="Translation initiation factor eif-2b, domain 2"/>
    <property type="match status" value="1"/>
</dbReference>
<dbReference type="HAMAP" id="MF_01678">
    <property type="entry name" value="Salvage_MtnA"/>
    <property type="match status" value="1"/>
</dbReference>
<dbReference type="InterPro" id="IPR000649">
    <property type="entry name" value="IF-2B-related"/>
</dbReference>
<dbReference type="InterPro" id="IPR005251">
    <property type="entry name" value="IF-M1Pi"/>
</dbReference>
<dbReference type="InterPro" id="IPR042529">
    <property type="entry name" value="IF_2B-like_C"/>
</dbReference>
<dbReference type="InterPro" id="IPR011559">
    <property type="entry name" value="Initiation_fac_2B_a/b/d"/>
</dbReference>
<dbReference type="InterPro" id="IPR027363">
    <property type="entry name" value="M1Pi_N"/>
</dbReference>
<dbReference type="InterPro" id="IPR037171">
    <property type="entry name" value="NagB/RpiA_transferase-like"/>
</dbReference>
<dbReference type="NCBIfam" id="TIGR00524">
    <property type="entry name" value="eIF-2B_rel"/>
    <property type="match status" value="1"/>
</dbReference>
<dbReference type="NCBIfam" id="NF004326">
    <property type="entry name" value="PRK05720.1"/>
    <property type="match status" value="1"/>
</dbReference>
<dbReference type="NCBIfam" id="TIGR00512">
    <property type="entry name" value="salvage_mtnA"/>
    <property type="match status" value="1"/>
</dbReference>
<dbReference type="PANTHER" id="PTHR43475">
    <property type="entry name" value="METHYLTHIORIBOSE-1-PHOSPHATE ISOMERASE"/>
    <property type="match status" value="1"/>
</dbReference>
<dbReference type="PANTHER" id="PTHR43475:SF1">
    <property type="entry name" value="METHYLTHIORIBOSE-1-PHOSPHATE ISOMERASE"/>
    <property type="match status" value="1"/>
</dbReference>
<dbReference type="Pfam" id="PF01008">
    <property type="entry name" value="IF-2B"/>
    <property type="match status" value="1"/>
</dbReference>
<dbReference type="SUPFAM" id="SSF100950">
    <property type="entry name" value="NagB/RpiA/CoA transferase-like"/>
    <property type="match status" value="1"/>
</dbReference>
<accession>B3LK82</accession>
<organism>
    <name type="scientific">Saccharomyces cerevisiae (strain RM11-1a)</name>
    <name type="common">Baker's yeast</name>
    <dbReference type="NCBI Taxonomy" id="285006"/>
    <lineage>
        <taxon>Eukaryota</taxon>
        <taxon>Fungi</taxon>
        <taxon>Dikarya</taxon>
        <taxon>Ascomycota</taxon>
        <taxon>Saccharomycotina</taxon>
        <taxon>Saccharomycetes</taxon>
        <taxon>Saccharomycetales</taxon>
        <taxon>Saccharomycetaceae</taxon>
        <taxon>Saccharomyces</taxon>
    </lineage>
</organism>
<evidence type="ECO:0000250" key="1">
    <source>
        <dbReference type="UniProtKB" id="Q06489"/>
    </source>
</evidence>
<evidence type="ECO:0000255" key="2">
    <source>
        <dbReference type="HAMAP-Rule" id="MF_03119"/>
    </source>
</evidence>
<feature type="initiator methionine" description="Removed" evidence="1">
    <location>
        <position position="1"/>
    </location>
</feature>
<feature type="chain" id="PRO_0000402050" description="Methylthioribose-1-phosphate isomerase">
    <location>
        <begin position="2"/>
        <end position="411"/>
    </location>
</feature>
<feature type="active site" description="Proton donor" evidence="2">
    <location>
        <position position="280"/>
    </location>
</feature>
<feature type="site" description="Transition state stabilizer" evidence="2">
    <location>
        <position position="181"/>
    </location>
</feature>
<feature type="modified residue" description="N-acetylserine" evidence="1">
    <location>
        <position position="2"/>
    </location>
</feature>
<feature type="modified residue" description="Phosphoserine" evidence="1">
    <location>
        <position position="351"/>
    </location>
</feature>
<name>MTNA_YEAS1</name>
<sequence length="411" mass="45020">MSLEAIVFDRSEPENVSVKVLDQLLLPYTTKYVPIHTIDDGYSVIKSMQVRGAPAIAIVGSLSVLTEVQLIKHNPTSDVATLYSLVNWESTKTVLNKRLDFLLSSRPTAVNLSNSLVEIKNILKSSSDLKAFDGSLYNYVCELIDEDLANNMKMGDNGAKYLIDVLQKDGFKDEFAVLTICNTGSLATSGYGTALGVIRSLWKDSLAKTDKADSGLDNEKCPRMGHVFPLETRPYNQGSRLTAYELVYDKIPSTLITDSSIAYRIRTSPIPIKAAFVGADRIVRNGDTANKIGTLQLAVICKQFGIKFFVVAPKTTIDNVTETGDDIIVEERNPEEFKVVTGTVINPENGSLILNESGEPITGKVGIAPLEINVWNPAFDITPHELIDGIITEEGVFTKNSSGEFQLESLF</sequence>
<comment type="function">
    <text evidence="2">Catalyzes the interconversion of methylthioribose-1-phosphate (MTR-1-P) into methylthioribulose-1-phosphate (MTRu-1-P).</text>
</comment>
<comment type="catalytic activity">
    <reaction evidence="2">
        <text>5-(methylsulfanyl)-alpha-D-ribose 1-phosphate = 5-(methylsulfanyl)-D-ribulose 1-phosphate</text>
        <dbReference type="Rhea" id="RHEA:19989"/>
        <dbReference type="ChEBI" id="CHEBI:58533"/>
        <dbReference type="ChEBI" id="CHEBI:58548"/>
        <dbReference type="EC" id="5.3.1.23"/>
    </reaction>
</comment>
<comment type="pathway">
    <text evidence="2">Amino-acid biosynthesis; L-methionine biosynthesis via salvage pathway; L-methionine from S-methyl-5-thio-alpha-D-ribose 1-phosphate: step 1/6.</text>
</comment>
<comment type="subunit">
    <text>Homodimer.</text>
</comment>
<comment type="subcellular location">
    <subcellularLocation>
        <location evidence="2">Cytoplasm</location>
    </subcellularLocation>
    <subcellularLocation>
        <location evidence="2">Nucleus</location>
    </subcellularLocation>
</comment>
<comment type="similarity">
    <text evidence="2">Belongs to the eIF-2B alpha/beta/delta subunits family. MtnA subfamily.</text>
</comment>